<name>MIAA_PSEP7</name>
<accession>A6VD58</accession>
<feature type="chain" id="PRO_1000020640" description="tRNA dimethylallyltransferase">
    <location>
        <begin position="1"/>
        <end position="323"/>
    </location>
</feature>
<feature type="region of interest" description="Interaction with substrate tRNA" evidence="1">
    <location>
        <begin position="37"/>
        <end position="40"/>
    </location>
</feature>
<feature type="region of interest" description="Interaction with substrate tRNA" evidence="1">
    <location>
        <begin position="161"/>
        <end position="165"/>
    </location>
</feature>
<feature type="binding site" evidence="1">
    <location>
        <begin position="12"/>
        <end position="19"/>
    </location>
    <ligand>
        <name>ATP</name>
        <dbReference type="ChEBI" id="CHEBI:30616"/>
    </ligand>
</feature>
<feature type="binding site" evidence="1">
    <location>
        <begin position="14"/>
        <end position="19"/>
    </location>
    <ligand>
        <name>substrate</name>
    </ligand>
</feature>
<feature type="site" description="Interaction with substrate tRNA" evidence="1">
    <location>
        <position position="103"/>
    </location>
</feature>
<feature type="site" description="Interaction with substrate tRNA" evidence="1">
    <location>
        <position position="125"/>
    </location>
</feature>
<proteinExistence type="inferred from homology"/>
<protein>
    <recommendedName>
        <fullName evidence="1">tRNA dimethylallyltransferase</fullName>
        <ecNumber evidence="1">2.5.1.75</ecNumber>
    </recommendedName>
    <alternativeName>
        <fullName evidence="1">Dimethylallyl diphosphate:tRNA dimethylallyltransferase</fullName>
        <shortName evidence="1">DMAPP:tRNA dimethylallyltransferase</shortName>
        <shortName evidence="1">DMATase</shortName>
    </alternativeName>
    <alternativeName>
        <fullName evidence="1">Isopentenyl-diphosphate:tRNA isopentenyltransferase</fullName>
        <shortName evidence="1">IPP transferase</shortName>
        <shortName evidence="1">IPPT</shortName>
        <shortName evidence="1">IPTase</shortName>
    </alternativeName>
</protein>
<evidence type="ECO:0000255" key="1">
    <source>
        <dbReference type="HAMAP-Rule" id="MF_00185"/>
    </source>
</evidence>
<dbReference type="EC" id="2.5.1.75" evidence="1"/>
<dbReference type="EMBL" id="CP000744">
    <property type="protein sequence ID" value="ABR81632.1"/>
    <property type="molecule type" value="Genomic_DNA"/>
</dbReference>
<dbReference type="RefSeq" id="WP_012077635.1">
    <property type="nucleotide sequence ID" value="NC_009656.1"/>
</dbReference>
<dbReference type="SMR" id="A6VD58"/>
<dbReference type="KEGG" id="pap:PSPA7_5674"/>
<dbReference type="HOGENOM" id="CLU_032616_0_0_6"/>
<dbReference type="Proteomes" id="UP000001582">
    <property type="component" value="Chromosome"/>
</dbReference>
<dbReference type="GO" id="GO:0005524">
    <property type="term" value="F:ATP binding"/>
    <property type="evidence" value="ECO:0007669"/>
    <property type="project" value="UniProtKB-UniRule"/>
</dbReference>
<dbReference type="GO" id="GO:0052381">
    <property type="term" value="F:tRNA dimethylallyltransferase activity"/>
    <property type="evidence" value="ECO:0007669"/>
    <property type="project" value="UniProtKB-UniRule"/>
</dbReference>
<dbReference type="GO" id="GO:0006400">
    <property type="term" value="P:tRNA modification"/>
    <property type="evidence" value="ECO:0007669"/>
    <property type="project" value="TreeGrafter"/>
</dbReference>
<dbReference type="FunFam" id="1.10.20.140:FF:000001">
    <property type="entry name" value="tRNA dimethylallyltransferase"/>
    <property type="match status" value="1"/>
</dbReference>
<dbReference type="Gene3D" id="1.10.20.140">
    <property type="match status" value="1"/>
</dbReference>
<dbReference type="Gene3D" id="3.40.50.300">
    <property type="entry name" value="P-loop containing nucleotide triphosphate hydrolases"/>
    <property type="match status" value="2"/>
</dbReference>
<dbReference type="HAMAP" id="MF_00185">
    <property type="entry name" value="IPP_trans"/>
    <property type="match status" value="1"/>
</dbReference>
<dbReference type="InterPro" id="IPR039657">
    <property type="entry name" value="Dimethylallyltransferase"/>
</dbReference>
<dbReference type="InterPro" id="IPR018022">
    <property type="entry name" value="IPT"/>
</dbReference>
<dbReference type="InterPro" id="IPR027417">
    <property type="entry name" value="P-loop_NTPase"/>
</dbReference>
<dbReference type="NCBIfam" id="TIGR00174">
    <property type="entry name" value="miaA"/>
    <property type="match status" value="1"/>
</dbReference>
<dbReference type="PANTHER" id="PTHR11088">
    <property type="entry name" value="TRNA DIMETHYLALLYLTRANSFERASE"/>
    <property type="match status" value="1"/>
</dbReference>
<dbReference type="PANTHER" id="PTHR11088:SF60">
    <property type="entry name" value="TRNA DIMETHYLALLYLTRANSFERASE"/>
    <property type="match status" value="1"/>
</dbReference>
<dbReference type="Pfam" id="PF01715">
    <property type="entry name" value="IPPT"/>
    <property type="match status" value="1"/>
</dbReference>
<dbReference type="SUPFAM" id="SSF52540">
    <property type="entry name" value="P-loop containing nucleoside triphosphate hydrolases"/>
    <property type="match status" value="1"/>
</dbReference>
<reference key="1">
    <citation type="submission" date="2007-06" db="EMBL/GenBank/DDBJ databases">
        <authorList>
            <person name="Dodson R.J."/>
            <person name="Harkins D."/>
            <person name="Paulsen I.T."/>
        </authorList>
    </citation>
    <scope>NUCLEOTIDE SEQUENCE [LARGE SCALE GENOMIC DNA]</scope>
    <source>
        <strain>DSM 24068 / PA7</strain>
    </source>
</reference>
<sequence>MPSLPPAIFLMGPTAAGKTDLAMALADALPCELISVDSALIYRGMDIGTAKPSRELLARYPHRLIDIRDPAESYSAAEFRADALAAMAEATARGRIPLLVGGTMLYYKALLEGLADMPGADPEVRAALEAEARAEGWEALHRQLAEVDPESAARIHPNDPQRLMRALEVYRVGGVSMSELRRRQSAEKADFDASGRNQLPYTVAQLAIAPEQRQVLHARIAQRFRQMLEQGFIAEVEALHARSDLHAGLPSIRAVGYRQVWDYLDGKLSYAEMTERGIIATRQLAKRQFTWLRSWSHLHWMDSLAGDNLPRALKYLKTVSILA</sequence>
<keyword id="KW-0067">ATP-binding</keyword>
<keyword id="KW-0460">Magnesium</keyword>
<keyword id="KW-0547">Nucleotide-binding</keyword>
<keyword id="KW-0808">Transferase</keyword>
<keyword id="KW-0819">tRNA processing</keyword>
<gene>
    <name evidence="1" type="primary">miaA</name>
    <name type="ordered locus">PSPA7_5674</name>
</gene>
<comment type="function">
    <text evidence="1">Catalyzes the transfer of a dimethylallyl group onto the adenine at position 37 in tRNAs that read codons beginning with uridine, leading to the formation of N6-(dimethylallyl)adenosine (i(6)A).</text>
</comment>
<comment type="catalytic activity">
    <reaction evidence="1">
        <text>adenosine(37) in tRNA + dimethylallyl diphosphate = N(6)-dimethylallyladenosine(37) in tRNA + diphosphate</text>
        <dbReference type="Rhea" id="RHEA:26482"/>
        <dbReference type="Rhea" id="RHEA-COMP:10162"/>
        <dbReference type="Rhea" id="RHEA-COMP:10375"/>
        <dbReference type="ChEBI" id="CHEBI:33019"/>
        <dbReference type="ChEBI" id="CHEBI:57623"/>
        <dbReference type="ChEBI" id="CHEBI:74411"/>
        <dbReference type="ChEBI" id="CHEBI:74415"/>
        <dbReference type="EC" id="2.5.1.75"/>
    </reaction>
</comment>
<comment type="cofactor">
    <cofactor evidence="1">
        <name>Mg(2+)</name>
        <dbReference type="ChEBI" id="CHEBI:18420"/>
    </cofactor>
</comment>
<comment type="subunit">
    <text evidence="1">Monomer.</text>
</comment>
<comment type="similarity">
    <text evidence="1">Belongs to the IPP transferase family.</text>
</comment>
<organism>
    <name type="scientific">Pseudomonas paraeruginosa (strain DSM 24068 / PA7)</name>
    <name type="common">Pseudomonas aeruginosa (strain PA7)</name>
    <dbReference type="NCBI Taxonomy" id="381754"/>
    <lineage>
        <taxon>Bacteria</taxon>
        <taxon>Pseudomonadati</taxon>
        <taxon>Pseudomonadota</taxon>
        <taxon>Gammaproteobacteria</taxon>
        <taxon>Pseudomonadales</taxon>
        <taxon>Pseudomonadaceae</taxon>
        <taxon>Pseudomonas</taxon>
        <taxon>Pseudomonas paraeruginosa</taxon>
    </lineage>
</organism>